<proteinExistence type="evidence at protein level"/>
<accession>O74369</accession>
<accession>Q9Y7M0</accession>
<name>CSS1_SCHPO</name>
<evidence type="ECO:0000250" key="1"/>
<evidence type="ECO:0000255" key="2"/>
<evidence type="ECO:0000269" key="3">
    <source>
    </source>
</evidence>
<evidence type="ECO:0000305" key="4"/>
<comment type="function">
    <text evidence="3">Inositol phosphosphingolipids phospholipase essential for the coordination of cell wall formation. Responsible for the hydrolysis of the phosphosphingolipids (IPS), inositol phosphorylceramide (IPC), mannosylinositol phosphorylceramide (MIPC), and mannosyldiinositol phosphorylceramide (M(IP)2C).</text>
</comment>
<comment type="cofactor">
    <cofactor evidence="1">
        <name>Mg(2+)</name>
        <dbReference type="ChEBI" id="CHEBI:18420"/>
    </cofactor>
</comment>
<comment type="pathway">
    <text>Lipid metabolism; sphingolipid metabolism.</text>
</comment>
<comment type="subcellular location">
    <subcellularLocation>
        <location evidence="3">Cell membrane</location>
        <topology evidence="3">Multi-pass membrane protein</topology>
    </subcellularLocation>
    <subcellularLocation>
        <location evidence="3">Endoplasmic reticulum membrane</location>
        <topology evidence="3">Multi-pass membrane protein</topology>
    </subcellularLocation>
</comment>
<comment type="similarity">
    <text evidence="4">Belongs to the neutral sphingomyelinase family.</text>
</comment>
<organism>
    <name type="scientific">Schizosaccharomyces pombe (strain 972 / ATCC 24843)</name>
    <name type="common">Fission yeast</name>
    <dbReference type="NCBI Taxonomy" id="284812"/>
    <lineage>
        <taxon>Eukaryota</taxon>
        <taxon>Fungi</taxon>
        <taxon>Dikarya</taxon>
        <taxon>Ascomycota</taxon>
        <taxon>Taphrinomycotina</taxon>
        <taxon>Schizosaccharomycetes</taxon>
        <taxon>Schizosaccharomycetales</taxon>
        <taxon>Schizosaccharomycetaceae</taxon>
        <taxon>Schizosaccharomyces</taxon>
    </lineage>
</organism>
<feature type="chain" id="PRO_0000075691" description="Inositol phosphosphingolipids phospholipase C">
    <location>
        <begin position="1"/>
        <end position="424"/>
    </location>
</feature>
<feature type="transmembrane region" description="Helical" evidence="2">
    <location>
        <begin position="335"/>
        <end position="357"/>
    </location>
</feature>
<feature type="transmembrane region" description="Helical" evidence="2">
    <location>
        <begin position="364"/>
        <end position="386"/>
    </location>
</feature>
<feature type="active site" description="Proton acceptor" evidence="1">
    <location>
        <position position="289"/>
    </location>
</feature>
<feature type="binding site" evidence="1">
    <location>
        <position position="49"/>
    </location>
    <ligand>
        <name>Mg(2+)</name>
        <dbReference type="ChEBI" id="CHEBI:18420"/>
    </ligand>
</feature>
<feature type="site" description="Important for substrate recognition" evidence="1">
    <location>
        <position position="181"/>
    </location>
</feature>
<dbReference type="EC" id="3.1.4.-"/>
<dbReference type="EMBL" id="CU329671">
    <property type="protein sequence ID" value="CAB39367.2"/>
    <property type="molecule type" value="Genomic_DNA"/>
</dbReference>
<dbReference type="PIR" id="T40641">
    <property type="entry name" value="T40641"/>
</dbReference>
<dbReference type="RefSeq" id="NP_596144.2">
    <property type="nucleotide sequence ID" value="NM_001022062.3"/>
</dbReference>
<dbReference type="SMR" id="O74369"/>
<dbReference type="BioGRID" id="277628">
    <property type="interactions" value="3"/>
</dbReference>
<dbReference type="FunCoup" id="O74369">
    <property type="interactions" value="43"/>
</dbReference>
<dbReference type="STRING" id="284812.O74369"/>
<dbReference type="iPTMnet" id="O74369"/>
<dbReference type="PaxDb" id="4896-SPBC32F12.01c.1"/>
<dbReference type="EnsemblFungi" id="SPBC32F12.01c.1">
    <property type="protein sequence ID" value="SPBC32F12.01c.1:pep"/>
    <property type="gene ID" value="SPBC32F12.01c"/>
</dbReference>
<dbReference type="PomBase" id="SPBC32F12.01c">
    <property type="gene designation" value="css1"/>
</dbReference>
<dbReference type="VEuPathDB" id="FungiDB:SPBC32F12.01c"/>
<dbReference type="eggNOG" id="KOG3873">
    <property type="taxonomic scope" value="Eukaryota"/>
</dbReference>
<dbReference type="HOGENOM" id="CLU_034001_0_0_1"/>
<dbReference type="InParanoid" id="O74369"/>
<dbReference type="OMA" id="IEESSMF"/>
<dbReference type="PhylomeDB" id="O74369"/>
<dbReference type="Reactome" id="R-SPO-9840310">
    <property type="pathway name" value="Glycosphingolipid catabolism"/>
</dbReference>
<dbReference type="UniPathway" id="UPA00222"/>
<dbReference type="PRO" id="PR:O74369"/>
<dbReference type="Proteomes" id="UP000002485">
    <property type="component" value="Chromosome II"/>
</dbReference>
<dbReference type="GO" id="GO:0071944">
    <property type="term" value="C:cell periphery"/>
    <property type="evidence" value="ECO:0000314"/>
    <property type="project" value="PomBase"/>
</dbReference>
<dbReference type="GO" id="GO:0005783">
    <property type="term" value="C:endoplasmic reticulum"/>
    <property type="evidence" value="ECO:0007005"/>
    <property type="project" value="PomBase"/>
</dbReference>
<dbReference type="GO" id="GO:0005789">
    <property type="term" value="C:endoplasmic reticulum membrane"/>
    <property type="evidence" value="ECO:0007669"/>
    <property type="project" value="UniProtKB-SubCell"/>
</dbReference>
<dbReference type="GO" id="GO:0000324">
    <property type="term" value="C:fungal-type vacuole"/>
    <property type="evidence" value="ECO:0000314"/>
    <property type="project" value="PomBase"/>
</dbReference>
<dbReference type="GO" id="GO:0016020">
    <property type="term" value="C:membrane"/>
    <property type="evidence" value="ECO:0000314"/>
    <property type="project" value="PomBase"/>
</dbReference>
<dbReference type="GO" id="GO:0005886">
    <property type="term" value="C:plasma membrane"/>
    <property type="evidence" value="ECO:0000269"/>
    <property type="project" value="PomBase"/>
</dbReference>
<dbReference type="GO" id="GO:0052712">
    <property type="term" value="F:inositol phosphosphingolipid phospholipase activity"/>
    <property type="evidence" value="ECO:0000315"/>
    <property type="project" value="PomBase"/>
</dbReference>
<dbReference type="GO" id="GO:0052714">
    <property type="term" value="F:mannosyl-inositol phosphorylceramide phospholipase activity"/>
    <property type="evidence" value="ECO:0000314"/>
    <property type="project" value="PomBase"/>
</dbReference>
<dbReference type="GO" id="GO:0046872">
    <property type="term" value="F:metal ion binding"/>
    <property type="evidence" value="ECO:0007669"/>
    <property type="project" value="UniProtKB-KW"/>
</dbReference>
<dbReference type="GO" id="GO:0004767">
    <property type="term" value="F:sphingomyelin phosphodiesterase activity"/>
    <property type="evidence" value="ECO:0007669"/>
    <property type="project" value="InterPro"/>
</dbReference>
<dbReference type="GO" id="GO:0071555">
    <property type="term" value="P:cell wall organization"/>
    <property type="evidence" value="ECO:0007669"/>
    <property type="project" value="UniProtKB-KW"/>
</dbReference>
<dbReference type="GO" id="GO:0046513">
    <property type="term" value="P:ceramide biosynthetic process"/>
    <property type="evidence" value="ECO:0000269"/>
    <property type="project" value="PomBase"/>
</dbReference>
<dbReference type="GO" id="GO:0046521">
    <property type="term" value="P:sphingoid catabolic process"/>
    <property type="evidence" value="ECO:0000269"/>
    <property type="project" value="PomBase"/>
</dbReference>
<dbReference type="GO" id="GO:0030149">
    <property type="term" value="P:sphingolipid catabolic process"/>
    <property type="evidence" value="ECO:0000318"/>
    <property type="project" value="GO_Central"/>
</dbReference>
<dbReference type="Gene3D" id="3.60.10.10">
    <property type="entry name" value="Endonuclease/exonuclease/phosphatase"/>
    <property type="match status" value="1"/>
</dbReference>
<dbReference type="InterPro" id="IPR036691">
    <property type="entry name" value="Endo/exonu/phosph_ase_sf"/>
</dbReference>
<dbReference type="InterPro" id="IPR005135">
    <property type="entry name" value="Endo/exonuclease/phosphatase"/>
</dbReference>
<dbReference type="InterPro" id="IPR038772">
    <property type="entry name" value="Sph/SMPD2-like"/>
</dbReference>
<dbReference type="PANTHER" id="PTHR16320:SF24">
    <property type="entry name" value="PHOSPHODIESTERASE, PUTATIVE-RELATED"/>
    <property type="match status" value="1"/>
</dbReference>
<dbReference type="PANTHER" id="PTHR16320">
    <property type="entry name" value="SPHINGOMYELINASE FAMILY MEMBER"/>
    <property type="match status" value="1"/>
</dbReference>
<dbReference type="Pfam" id="PF03372">
    <property type="entry name" value="Exo_endo_phos"/>
    <property type="match status" value="1"/>
</dbReference>
<dbReference type="SUPFAM" id="SSF56219">
    <property type="entry name" value="DNase I-like"/>
    <property type="match status" value="1"/>
</dbReference>
<sequence>MSVEKAPELRVLSFNCWGLRFVSKYRTERLKAVGEKLAKCDYDIVLLQEVWSIYDFQEIRNLVSCNLVYSRFFHSAAMGAGLAMFSKFPIIESSMNKYPLNGRPQAFWRGDWYVGKGVATASLQHPSGRIISLFNTHLHAPYGKGADTYLCHRLSQAWYISKLLRAAVQRGHIVIAAGDFNIQPLSVPHEIITSYGLVNDAWLSVYPDQVEHPPNRFSMNDKELVEIAGTTCDSRLNTWRENISSKDMDDFVAKRLDYVFHSPSTCEAKNAKVVFLERVPKLDCSYSDHFAIETVLSIKLQPIPVQETRVSYSIIDDTLGITYQYMARERLHMRLRIAHLLISIPLIIGVHVAIAWCDPAWLKVIILFFTVMLTIAAVVNGFCIGLLFGRWEFNGLLEFVAELKEQKLLCKQYLVDHPLPFAKS</sequence>
<protein>
    <recommendedName>
        <fullName>Inositol phosphosphingolipids phospholipase C</fullName>
        <shortName>IPS phospholipase C</shortName>
        <shortName>IPS-PLC</shortName>
        <ecNumber>3.1.4.-</ecNumber>
    </recommendedName>
</protein>
<keyword id="KW-1003">Cell membrane</keyword>
<keyword id="KW-0961">Cell wall biogenesis/degradation</keyword>
<keyword id="KW-0256">Endoplasmic reticulum</keyword>
<keyword id="KW-0378">Hydrolase</keyword>
<keyword id="KW-0443">Lipid metabolism</keyword>
<keyword id="KW-0460">Magnesium</keyword>
<keyword id="KW-0472">Membrane</keyword>
<keyword id="KW-0479">Metal-binding</keyword>
<keyword id="KW-1185">Reference proteome</keyword>
<keyword id="KW-0746">Sphingolipid metabolism</keyword>
<keyword id="KW-0812">Transmembrane</keyword>
<keyword id="KW-1133">Transmembrane helix</keyword>
<reference key="1">
    <citation type="journal article" date="2002" name="Nature">
        <title>The genome sequence of Schizosaccharomyces pombe.</title>
        <authorList>
            <person name="Wood V."/>
            <person name="Gwilliam R."/>
            <person name="Rajandream M.A."/>
            <person name="Lyne M.H."/>
            <person name="Lyne R."/>
            <person name="Stewart A."/>
            <person name="Sgouros J.G."/>
            <person name="Peat N."/>
            <person name="Hayles J."/>
            <person name="Baker S.G."/>
            <person name="Basham D."/>
            <person name="Bowman S."/>
            <person name="Brooks K."/>
            <person name="Brown D."/>
            <person name="Brown S."/>
            <person name="Chillingworth T."/>
            <person name="Churcher C.M."/>
            <person name="Collins M."/>
            <person name="Connor R."/>
            <person name="Cronin A."/>
            <person name="Davis P."/>
            <person name="Feltwell T."/>
            <person name="Fraser A."/>
            <person name="Gentles S."/>
            <person name="Goble A."/>
            <person name="Hamlin N."/>
            <person name="Harris D.E."/>
            <person name="Hidalgo J."/>
            <person name="Hodgson G."/>
            <person name="Holroyd S."/>
            <person name="Hornsby T."/>
            <person name="Howarth S."/>
            <person name="Huckle E.J."/>
            <person name="Hunt S."/>
            <person name="Jagels K."/>
            <person name="James K.D."/>
            <person name="Jones L."/>
            <person name="Jones M."/>
            <person name="Leather S."/>
            <person name="McDonald S."/>
            <person name="McLean J."/>
            <person name="Mooney P."/>
            <person name="Moule S."/>
            <person name="Mungall K.L."/>
            <person name="Murphy L.D."/>
            <person name="Niblett D."/>
            <person name="Odell C."/>
            <person name="Oliver K."/>
            <person name="O'Neil S."/>
            <person name="Pearson D."/>
            <person name="Quail M.A."/>
            <person name="Rabbinowitsch E."/>
            <person name="Rutherford K.M."/>
            <person name="Rutter S."/>
            <person name="Saunders D."/>
            <person name="Seeger K."/>
            <person name="Sharp S."/>
            <person name="Skelton J."/>
            <person name="Simmonds M.N."/>
            <person name="Squares R."/>
            <person name="Squares S."/>
            <person name="Stevens K."/>
            <person name="Taylor K."/>
            <person name="Taylor R.G."/>
            <person name="Tivey A."/>
            <person name="Walsh S.V."/>
            <person name="Warren T."/>
            <person name="Whitehead S."/>
            <person name="Woodward J.R."/>
            <person name="Volckaert G."/>
            <person name="Aert R."/>
            <person name="Robben J."/>
            <person name="Grymonprez B."/>
            <person name="Weltjens I."/>
            <person name="Vanstreels E."/>
            <person name="Rieger M."/>
            <person name="Schaefer M."/>
            <person name="Mueller-Auer S."/>
            <person name="Gabel C."/>
            <person name="Fuchs M."/>
            <person name="Duesterhoeft A."/>
            <person name="Fritzc C."/>
            <person name="Holzer E."/>
            <person name="Moestl D."/>
            <person name="Hilbert H."/>
            <person name="Borzym K."/>
            <person name="Langer I."/>
            <person name="Beck A."/>
            <person name="Lehrach H."/>
            <person name="Reinhardt R."/>
            <person name="Pohl T.M."/>
            <person name="Eger P."/>
            <person name="Zimmermann W."/>
            <person name="Wedler H."/>
            <person name="Wambutt R."/>
            <person name="Purnelle B."/>
            <person name="Goffeau A."/>
            <person name="Cadieu E."/>
            <person name="Dreano S."/>
            <person name="Gloux S."/>
            <person name="Lelaure V."/>
            <person name="Mottier S."/>
            <person name="Galibert F."/>
            <person name="Aves S.J."/>
            <person name="Xiang Z."/>
            <person name="Hunt C."/>
            <person name="Moore K."/>
            <person name="Hurst S.M."/>
            <person name="Lucas M."/>
            <person name="Rochet M."/>
            <person name="Gaillardin C."/>
            <person name="Tallada V.A."/>
            <person name="Garzon A."/>
            <person name="Thode G."/>
            <person name="Daga R.R."/>
            <person name="Cruzado L."/>
            <person name="Jimenez J."/>
            <person name="Sanchez M."/>
            <person name="del Rey F."/>
            <person name="Benito J."/>
            <person name="Dominguez A."/>
            <person name="Revuelta J.L."/>
            <person name="Moreno S."/>
            <person name="Armstrong J."/>
            <person name="Forsburg S.L."/>
            <person name="Cerutti L."/>
            <person name="Lowe T."/>
            <person name="McCombie W.R."/>
            <person name="Paulsen I."/>
            <person name="Potashkin J."/>
            <person name="Shpakovski G.V."/>
            <person name="Ussery D."/>
            <person name="Barrell B.G."/>
            <person name="Nurse P."/>
        </authorList>
    </citation>
    <scope>NUCLEOTIDE SEQUENCE [LARGE SCALE GENOMIC DNA]</scope>
    <source>
        <strain>972 / ATCC 24843</strain>
    </source>
</reference>
<reference key="2">
    <citation type="journal article" date="2001" name="Genetics">
        <title>Coordination between fission yeast glucan formation and growth requires a sphingolipase activity.</title>
        <authorList>
            <person name="Feoktistova A."/>
            <person name="Magnelli P."/>
            <person name="Abeijon C."/>
            <person name="Perez P."/>
            <person name="Lester R.L."/>
            <person name="Dickson R.C."/>
            <person name="Gould K.L."/>
        </authorList>
    </citation>
    <scope>SUBCELLULAR LOCATION</scope>
    <scope>FUNCTION</scope>
    <scope>CATALYTIC ACTIVITY</scope>
</reference>
<reference key="3">
    <citation type="journal article" date="2006" name="Nat. Biotechnol.">
        <title>ORFeome cloning and global analysis of protein localization in the fission yeast Schizosaccharomyces pombe.</title>
        <authorList>
            <person name="Matsuyama A."/>
            <person name="Arai R."/>
            <person name="Yashiroda Y."/>
            <person name="Shirai A."/>
            <person name="Kamata A."/>
            <person name="Sekido S."/>
            <person name="Kobayashi Y."/>
            <person name="Hashimoto A."/>
            <person name="Hamamoto M."/>
            <person name="Hiraoka Y."/>
            <person name="Horinouchi S."/>
            <person name="Yoshida M."/>
        </authorList>
    </citation>
    <scope>SUBCELLULAR LOCATION [LARGE SCALE ANALYSIS]</scope>
</reference>
<gene>
    <name type="primary">css1</name>
    <name type="ORF">SPBC32F12.01c</name>
    <name type="ORF">SPBC685.10c</name>
</gene>